<accession>Q7QIL8</accession>
<comment type="function">
    <text evidence="1">Component of the eukaryotic translation initiation factor 3 (eIF-3) complex, which is involved in protein synthesis of a specialized repertoire of mRNAs and, together with other initiation factors, stimulates binding of mRNA and methionyl-tRNAi to the 40S ribosome. The eIF-3 complex specifically targets and initiates translation of a subset of mRNAs involved in cell proliferation.</text>
</comment>
<comment type="subunit">
    <text evidence="1">Component of the eukaryotic translation initiation factor 3 (eIF-3) complex.</text>
</comment>
<comment type="subcellular location">
    <subcellularLocation>
        <location evidence="1">Cytoplasm</location>
    </subcellularLocation>
</comment>
<comment type="similarity">
    <text evidence="1">Belongs to the eIF-3 subunit E family.</text>
</comment>
<reference key="1">
    <citation type="journal article" date="2002" name="Science">
        <title>The genome sequence of the malaria mosquito Anopheles gambiae.</title>
        <authorList>
            <person name="Holt R.A."/>
            <person name="Subramanian G.M."/>
            <person name="Halpern A."/>
            <person name="Sutton G.G."/>
            <person name="Charlab R."/>
            <person name="Nusskern D.R."/>
            <person name="Wincker P."/>
            <person name="Clark A.G."/>
            <person name="Ribeiro J.M.C."/>
            <person name="Wides R."/>
            <person name="Salzberg S.L."/>
            <person name="Loftus B.J."/>
            <person name="Yandell M.D."/>
            <person name="Majoros W.H."/>
            <person name="Rusch D.B."/>
            <person name="Lai Z."/>
            <person name="Kraft C.L."/>
            <person name="Abril J.F."/>
            <person name="Anthouard V."/>
            <person name="Arensburger P."/>
            <person name="Atkinson P.W."/>
            <person name="Baden H."/>
            <person name="de Berardinis V."/>
            <person name="Baldwin D."/>
            <person name="Benes V."/>
            <person name="Biedler J."/>
            <person name="Blass C."/>
            <person name="Bolanos R."/>
            <person name="Boscus D."/>
            <person name="Barnstead M."/>
            <person name="Cai S."/>
            <person name="Center A."/>
            <person name="Chaturverdi K."/>
            <person name="Christophides G.K."/>
            <person name="Chrystal M.A.M."/>
            <person name="Clamp M."/>
            <person name="Cravchik A."/>
            <person name="Curwen V."/>
            <person name="Dana A."/>
            <person name="Delcher A."/>
            <person name="Dew I."/>
            <person name="Evans C.A."/>
            <person name="Flanigan M."/>
            <person name="Grundschober-Freimoser A."/>
            <person name="Friedli L."/>
            <person name="Gu Z."/>
            <person name="Guan P."/>
            <person name="Guigo R."/>
            <person name="Hillenmeyer M.E."/>
            <person name="Hladun S.L."/>
            <person name="Hogan J.R."/>
            <person name="Hong Y.S."/>
            <person name="Hoover J."/>
            <person name="Jaillon O."/>
            <person name="Ke Z."/>
            <person name="Kodira C.D."/>
            <person name="Kokoza E."/>
            <person name="Koutsos A."/>
            <person name="Letunic I."/>
            <person name="Levitsky A.A."/>
            <person name="Liang Y."/>
            <person name="Lin J.-J."/>
            <person name="Lobo N.F."/>
            <person name="Lopez J.R."/>
            <person name="Malek J.A."/>
            <person name="McIntosh T.C."/>
            <person name="Meister S."/>
            <person name="Miller J.R."/>
            <person name="Mobarry C."/>
            <person name="Mongin E."/>
            <person name="Murphy S.D."/>
            <person name="O'Brochta D.A."/>
            <person name="Pfannkoch C."/>
            <person name="Qi R."/>
            <person name="Regier M.A."/>
            <person name="Remington K."/>
            <person name="Shao H."/>
            <person name="Sharakhova M.V."/>
            <person name="Sitter C.D."/>
            <person name="Shetty J."/>
            <person name="Smith T.J."/>
            <person name="Strong R."/>
            <person name="Sun J."/>
            <person name="Thomasova D."/>
            <person name="Ton L.Q."/>
            <person name="Topalis P."/>
            <person name="Tu Z.J."/>
            <person name="Unger M.F."/>
            <person name="Walenz B."/>
            <person name="Wang A.H."/>
            <person name="Wang J."/>
            <person name="Wang M."/>
            <person name="Wang X."/>
            <person name="Woodford K.J."/>
            <person name="Wortman J.R."/>
            <person name="Wu M."/>
            <person name="Yao A."/>
            <person name="Zdobnov E.M."/>
            <person name="Zhang H."/>
            <person name="Zhao Q."/>
            <person name="Zhao S."/>
            <person name="Zhu S.C."/>
            <person name="Zhimulev I."/>
            <person name="Coluzzi M."/>
            <person name="della Torre A."/>
            <person name="Roth C.W."/>
            <person name="Louis C."/>
            <person name="Kalush F."/>
            <person name="Mural R.J."/>
            <person name="Myers E.W."/>
            <person name="Adams M.D."/>
            <person name="Smith H.O."/>
            <person name="Broder S."/>
            <person name="Gardner M.J."/>
            <person name="Fraser C.M."/>
            <person name="Birney E."/>
            <person name="Bork P."/>
            <person name="Brey P.T."/>
            <person name="Venter J.C."/>
            <person name="Weissenbach J."/>
            <person name="Kafatos F.C."/>
            <person name="Collins F.H."/>
            <person name="Hoffman S.L."/>
        </authorList>
    </citation>
    <scope>NUCLEOTIDE SEQUENCE [LARGE SCALE GENOMIC DNA]</scope>
    <source>
        <strain>PEST</strain>
    </source>
</reference>
<sequence>MAKFDLTAKNCQYLDRHLTFPLLEFLLQKKVFDQTSLLKFILETVSKTNMVDYKHDIRERLAMDKVHPDELAQGRANVLATLKELQAEVAPLMKCMEELKNPDSTKDSKSVIHALQQTLDYDIILSAQKLAKYLYECGNYNDSLSYLYVCMLVMEPNDKNYLGVLWGKLAVEILTLNWQTALEDLTRLRDFIENYNFSPIQVLQQRAWLIHWSVLVFFNHGKGRDLIIDMFLYKPQYLNAIQTMCPHILRYLATAVIINRGRRNALKDLIKVIQQESYTYRDPITEFLEHLYVNFDFEGARKKLHECQTVIVNDFFIIGCLTEFVENARLMIFETFCRIHQCITIGMLADKLNMKPDEAECWIVNLIRNARLDAKIDSKLGHVVMGTQPLSPYQQLVEKIDSLSVRSEALTLLVERKHKAKTQEAGEGHWKYY</sequence>
<keyword id="KW-0963">Cytoplasm</keyword>
<keyword id="KW-0396">Initiation factor</keyword>
<keyword id="KW-0648">Protein biosynthesis</keyword>
<keyword id="KW-1185">Reference proteome</keyword>
<feature type="chain" id="PRO_0000365960" description="Eukaryotic translation initiation factor 3 subunit E">
    <location>
        <begin position="1"/>
        <end position="433"/>
    </location>
</feature>
<feature type="domain" description="PCI" evidence="2">
    <location>
        <begin position="217"/>
        <end position="390"/>
    </location>
</feature>
<proteinExistence type="inferred from homology"/>
<gene>
    <name type="primary">eIF3-S6</name>
    <name type="ORF">AGAP006944</name>
</gene>
<name>EIF3E_ANOGA</name>
<organism>
    <name type="scientific">Anopheles gambiae</name>
    <name type="common">African malaria mosquito</name>
    <dbReference type="NCBI Taxonomy" id="7165"/>
    <lineage>
        <taxon>Eukaryota</taxon>
        <taxon>Metazoa</taxon>
        <taxon>Ecdysozoa</taxon>
        <taxon>Arthropoda</taxon>
        <taxon>Hexapoda</taxon>
        <taxon>Insecta</taxon>
        <taxon>Pterygota</taxon>
        <taxon>Neoptera</taxon>
        <taxon>Endopterygota</taxon>
        <taxon>Diptera</taxon>
        <taxon>Nematocera</taxon>
        <taxon>Culicoidea</taxon>
        <taxon>Culicidae</taxon>
        <taxon>Anophelinae</taxon>
        <taxon>Anopheles</taxon>
    </lineage>
</organism>
<evidence type="ECO:0000255" key="1">
    <source>
        <dbReference type="HAMAP-Rule" id="MF_03004"/>
    </source>
</evidence>
<evidence type="ECO:0000255" key="2">
    <source>
        <dbReference type="PROSITE-ProRule" id="PRU01185"/>
    </source>
</evidence>
<dbReference type="EMBL" id="AAAB01008807">
    <property type="protein sequence ID" value="EAA04727.2"/>
    <property type="molecule type" value="Genomic_DNA"/>
</dbReference>
<dbReference type="SMR" id="Q7QIL8"/>
<dbReference type="FunCoup" id="Q7QIL8">
    <property type="interactions" value="2709"/>
</dbReference>
<dbReference type="STRING" id="7165.Q7QIL8"/>
<dbReference type="PaxDb" id="7165-AGAP006944-PA"/>
<dbReference type="EnsemblMetazoa" id="AGAP006944-RA">
    <property type="protein sequence ID" value="AGAP006944-PA"/>
    <property type="gene ID" value="AGAP006944"/>
</dbReference>
<dbReference type="GeneID" id="1270140"/>
<dbReference type="KEGG" id="aga:1270140"/>
<dbReference type="CTD" id="3646"/>
<dbReference type="VEuPathDB" id="VectorBase:AGAMI1_012313"/>
<dbReference type="VEuPathDB" id="VectorBase:AGAP006944"/>
<dbReference type="eggNOG" id="KOG2758">
    <property type="taxonomic scope" value="Eukaryota"/>
</dbReference>
<dbReference type="HOGENOM" id="CLU_031132_0_0_1"/>
<dbReference type="InParanoid" id="Q7QIL8"/>
<dbReference type="OMA" id="NCPWILR"/>
<dbReference type="PhylomeDB" id="Q7QIL8"/>
<dbReference type="Proteomes" id="UP000007062">
    <property type="component" value="Chromosome 2L"/>
</dbReference>
<dbReference type="GO" id="GO:0016282">
    <property type="term" value="C:eukaryotic 43S preinitiation complex"/>
    <property type="evidence" value="ECO:0007669"/>
    <property type="project" value="UniProtKB-UniRule"/>
</dbReference>
<dbReference type="GO" id="GO:0033290">
    <property type="term" value="C:eukaryotic 48S preinitiation complex"/>
    <property type="evidence" value="ECO:0007669"/>
    <property type="project" value="UniProtKB-UniRule"/>
</dbReference>
<dbReference type="GO" id="GO:0005852">
    <property type="term" value="C:eukaryotic translation initiation factor 3 complex"/>
    <property type="evidence" value="ECO:0000318"/>
    <property type="project" value="GO_Central"/>
</dbReference>
<dbReference type="GO" id="GO:0071540">
    <property type="term" value="C:eukaryotic translation initiation factor 3 complex, eIF3e"/>
    <property type="evidence" value="ECO:0007669"/>
    <property type="project" value="UniProtKB-UniRule"/>
</dbReference>
<dbReference type="GO" id="GO:0005634">
    <property type="term" value="C:nucleus"/>
    <property type="evidence" value="ECO:0000318"/>
    <property type="project" value="GO_Central"/>
</dbReference>
<dbReference type="GO" id="GO:0003743">
    <property type="term" value="F:translation initiation factor activity"/>
    <property type="evidence" value="ECO:0007669"/>
    <property type="project" value="UniProtKB-UniRule"/>
</dbReference>
<dbReference type="GO" id="GO:0001732">
    <property type="term" value="P:formation of cytoplasmic translation initiation complex"/>
    <property type="evidence" value="ECO:0007669"/>
    <property type="project" value="UniProtKB-UniRule"/>
</dbReference>
<dbReference type="GO" id="GO:0006413">
    <property type="term" value="P:translational initiation"/>
    <property type="evidence" value="ECO:0000318"/>
    <property type="project" value="GO_Central"/>
</dbReference>
<dbReference type="CDD" id="cd21378">
    <property type="entry name" value="eIF3E"/>
    <property type="match status" value="1"/>
</dbReference>
<dbReference type="HAMAP" id="MF_03004">
    <property type="entry name" value="eIF3e"/>
    <property type="match status" value="1"/>
</dbReference>
<dbReference type="InterPro" id="IPR016650">
    <property type="entry name" value="eIF3e"/>
</dbReference>
<dbReference type="InterPro" id="IPR019010">
    <property type="entry name" value="eIF3e_N"/>
</dbReference>
<dbReference type="InterPro" id="IPR000717">
    <property type="entry name" value="PCI_dom"/>
</dbReference>
<dbReference type="InterPro" id="IPR036390">
    <property type="entry name" value="WH_DNA-bd_sf"/>
</dbReference>
<dbReference type="PANTHER" id="PTHR10317">
    <property type="entry name" value="EUKARYOTIC TRANSLATION INITIATION FACTOR 3 SUBUNIT E"/>
    <property type="match status" value="1"/>
</dbReference>
<dbReference type="Pfam" id="PF09440">
    <property type="entry name" value="eIF3_N"/>
    <property type="match status" value="1"/>
</dbReference>
<dbReference type="Pfam" id="PF01399">
    <property type="entry name" value="PCI"/>
    <property type="match status" value="1"/>
</dbReference>
<dbReference type="PIRSF" id="PIRSF016255">
    <property type="entry name" value="eIF3e_su6"/>
    <property type="match status" value="1"/>
</dbReference>
<dbReference type="SMART" id="SM01186">
    <property type="entry name" value="eIF3_N"/>
    <property type="match status" value="1"/>
</dbReference>
<dbReference type="SMART" id="SM00088">
    <property type="entry name" value="PINT"/>
    <property type="match status" value="1"/>
</dbReference>
<dbReference type="SUPFAM" id="SSF46785">
    <property type="entry name" value="Winged helix' DNA-binding domain"/>
    <property type="match status" value="1"/>
</dbReference>
<dbReference type="PROSITE" id="PS50250">
    <property type="entry name" value="PCI"/>
    <property type="match status" value="1"/>
</dbReference>
<protein>
    <recommendedName>
        <fullName evidence="1">Eukaryotic translation initiation factor 3 subunit E</fullName>
        <shortName evidence="1">eIF3e</shortName>
    </recommendedName>
    <alternativeName>
        <fullName evidence="1">Eukaryotic translation initiation factor 3 subunit 6</fullName>
    </alternativeName>
</protein>